<sequence>MAKISKRRQAFAAKVDRQKLYPIDDALALVKECASAKFDESIDVAVQLGIDAKKSDQVVRGSVVLPAGTGKSVRVAVFAQGEKAEQARAAGAEVVGMEDLAEQIKAGQMDFDIVIASPDTMRIVGTLGQILGPRGLMPNPKVGTVTPDVATAVKNAKAGQVQFRVDKAGIIHATIGRASFEPTALRTNLSALIEALQKAKPATSKGVYLRKIALSSTMGVGVRVDQGSLAAQ</sequence>
<accession>Q63Q00</accession>
<feature type="chain" id="PRO_0000125634" description="Large ribosomal subunit protein uL1">
    <location>
        <begin position="1"/>
        <end position="232"/>
    </location>
</feature>
<proteinExistence type="inferred from homology"/>
<gene>
    <name evidence="1" type="primary">rplA</name>
    <name type="ordered locus">BPSL3224</name>
</gene>
<dbReference type="EMBL" id="BX571965">
    <property type="protein sequence ID" value="CAH37235.1"/>
    <property type="molecule type" value="Genomic_DNA"/>
</dbReference>
<dbReference type="RefSeq" id="WP_004185135.1">
    <property type="nucleotide sequence ID" value="NZ_CP009538.1"/>
</dbReference>
<dbReference type="RefSeq" id="YP_109818.1">
    <property type="nucleotide sequence ID" value="NC_006350.1"/>
</dbReference>
<dbReference type="SMR" id="Q63Q00"/>
<dbReference type="STRING" id="272560.BPSL3224"/>
<dbReference type="GeneID" id="93061844"/>
<dbReference type="KEGG" id="bps:BPSL3224"/>
<dbReference type="PATRIC" id="fig|272560.51.peg.2014"/>
<dbReference type="eggNOG" id="COG0081">
    <property type="taxonomic scope" value="Bacteria"/>
</dbReference>
<dbReference type="Proteomes" id="UP000000605">
    <property type="component" value="Chromosome 1"/>
</dbReference>
<dbReference type="GO" id="GO:0022625">
    <property type="term" value="C:cytosolic large ribosomal subunit"/>
    <property type="evidence" value="ECO:0007669"/>
    <property type="project" value="TreeGrafter"/>
</dbReference>
<dbReference type="GO" id="GO:0019843">
    <property type="term" value="F:rRNA binding"/>
    <property type="evidence" value="ECO:0007669"/>
    <property type="project" value="UniProtKB-UniRule"/>
</dbReference>
<dbReference type="GO" id="GO:0003735">
    <property type="term" value="F:structural constituent of ribosome"/>
    <property type="evidence" value="ECO:0007669"/>
    <property type="project" value="InterPro"/>
</dbReference>
<dbReference type="GO" id="GO:0000049">
    <property type="term" value="F:tRNA binding"/>
    <property type="evidence" value="ECO:0007669"/>
    <property type="project" value="UniProtKB-KW"/>
</dbReference>
<dbReference type="GO" id="GO:0006417">
    <property type="term" value="P:regulation of translation"/>
    <property type="evidence" value="ECO:0007669"/>
    <property type="project" value="UniProtKB-KW"/>
</dbReference>
<dbReference type="GO" id="GO:0006412">
    <property type="term" value="P:translation"/>
    <property type="evidence" value="ECO:0007669"/>
    <property type="project" value="UniProtKB-UniRule"/>
</dbReference>
<dbReference type="CDD" id="cd00403">
    <property type="entry name" value="Ribosomal_L1"/>
    <property type="match status" value="1"/>
</dbReference>
<dbReference type="FunFam" id="3.40.50.790:FF:000001">
    <property type="entry name" value="50S ribosomal protein L1"/>
    <property type="match status" value="1"/>
</dbReference>
<dbReference type="Gene3D" id="3.30.190.20">
    <property type="match status" value="1"/>
</dbReference>
<dbReference type="Gene3D" id="3.40.50.790">
    <property type="match status" value="1"/>
</dbReference>
<dbReference type="HAMAP" id="MF_01318_B">
    <property type="entry name" value="Ribosomal_uL1_B"/>
    <property type="match status" value="1"/>
</dbReference>
<dbReference type="InterPro" id="IPR005878">
    <property type="entry name" value="Ribosom_uL1_bac-type"/>
</dbReference>
<dbReference type="InterPro" id="IPR002143">
    <property type="entry name" value="Ribosomal_uL1"/>
</dbReference>
<dbReference type="InterPro" id="IPR023674">
    <property type="entry name" value="Ribosomal_uL1-like"/>
</dbReference>
<dbReference type="InterPro" id="IPR028364">
    <property type="entry name" value="Ribosomal_uL1/biogenesis"/>
</dbReference>
<dbReference type="InterPro" id="IPR016095">
    <property type="entry name" value="Ribosomal_uL1_3-a/b-sand"/>
</dbReference>
<dbReference type="InterPro" id="IPR023673">
    <property type="entry name" value="Ribosomal_uL1_CS"/>
</dbReference>
<dbReference type="NCBIfam" id="TIGR01169">
    <property type="entry name" value="rplA_bact"/>
    <property type="match status" value="1"/>
</dbReference>
<dbReference type="PANTHER" id="PTHR36427">
    <property type="entry name" value="54S RIBOSOMAL PROTEIN L1, MITOCHONDRIAL"/>
    <property type="match status" value="1"/>
</dbReference>
<dbReference type="PANTHER" id="PTHR36427:SF3">
    <property type="entry name" value="LARGE RIBOSOMAL SUBUNIT PROTEIN UL1M"/>
    <property type="match status" value="1"/>
</dbReference>
<dbReference type="Pfam" id="PF00687">
    <property type="entry name" value="Ribosomal_L1"/>
    <property type="match status" value="1"/>
</dbReference>
<dbReference type="PIRSF" id="PIRSF002155">
    <property type="entry name" value="Ribosomal_L1"/>
    <property type="match status" value="1"/>
</dbReference>
<dbReference type="SUPFAM" id="SSF56808">
    <property type="entry name" value="Ribosomal protein L1"/>
    <property type="match status" value="1"/>
</dbReference>
<dbReference type="PROSITE" id="PS01199">
    <property type="entry name" value="RIBOSOMAL_L1"/>
    <property type="match status" value="1"/>
</dbReference>
<protein>
    <recommendedName>
        <fullName evidence="1">Large ribosomal subunit protein uL1</fullName>
    </recommendedName>
    <alternativeName>
        <fullName evidence="2">50S ribosomal protein L1</fullName>
    </alternativeName>
</protein>
<organism>
    <name type="scientific">Burkholderia pseudomallei (strain K96243)</name>
    <dbReference type="NCBI Taxonomy" id="272560"/>
    <lineage>
        <taxon>Bacteria</taxon>
        <taxon>Pseudomonadati</taxon>
        <taxon>Pseudomonadota</taxon>
        <taxon>Betaproteobacteria</taxon>
        <taxon>Burkholderiales</taxon>
        <taxon>Burkholderiaceae</taxon>
        <taxon>Burkholderia</taxon>
        <taxon>pseudomallei group</taxon>
    </lineage>
</organism>
<reference key="1">
    <citation type="journal article" date="2004" name="Proc. Natl. Acad. Sci. U.S.A.">
        <title>Genomic plasticity of the causative agent of melioidosis, Burkholderia pseudomallei.</title>
        <authorList>
            <person name="Holden M.T.G."/>
            <person name="Titball R.W."/>
            <person name="Peacock S.J."/>
            <person name="Cerdeno-Tarraga A.-M."/>
            <person name="Atkins T."/>
            <person name="Crossman L.C."/>
            <person name="Pitt T."/>
            <person name="Churcher C."/>
            <person name="Mungall K.L."/>
            <person name="Bentley S.D."/>
            <person name="Sebaihia M."/>
            <person name="Thomson N.R."/>
            <person name="Bason N."/>
            <person name="Beacham I.R."/>
            <person name="Brooks K."/>
            <person name="Brown K.A."/>
            <person name="Brown N.F."/>
            <person name="Challis G.L."/>
            <person name="Cherevach I."/>
            <person name="Chillingworth T."/>
            <person name="Cronin A."/>
            <person name="Crossett B."/>
            <person name="Davis P."/>
            <person name="DeShazer D."/>
            <person name="Feltwell T."/>
            <person name="Fraser A."/>
            <person name="Hance Z."/>
            <person name="Hauser H."/>
            <person name="Holroyd S."/>
            <person name="Jagels K."/>
            <person name="Keith K.E."/>
            <person name="Maddison M."/>
            <person name="Moule S."/>
            <person name="Price C."/>
            <person name="Quail M.A."/>
            <person name="Rabbinowitsch E."/>
            <person name="Rutherford K."/>
            <person name="Sanders M."/>
            <person name="Simmonds M."/>
            <person name="Songsivilai S."/>
            <person name="Stevens K."/>
            <person name="Tumapa S."/>
            <person name="Vesaratchavest M."/>
            <person name="Whitehead S."/>
            <person name="Yeats C."/>
            <person name="Barrell B.G."/>
            <person name="Oyston P.C.F."/>
            <person name="Parkhill J."/>
        </authorList>
    </citation>
    <scope>NUCLEOTIDE SEQUENCE [LARGE SCALE GENOMIC DNA]</scope>
    <source>
        <strain>K96243</strain>
    </source>
</reference>
<evidence type="ECO:0000255" key="1">
    <source>
        <dbReference type="HAMAP-Rule" id="MF_01318"/>
    </source>
</evidence>
<evidence type="ECO:0000305" key="2"/>
<comment type="function">
    <text evidence="1">Binds directly to 23S rRNA. The L1 stalk is quite mobile in the ribosome, and is involved in E site tRNA release.</text>
</comment>
<comment type="function">
    <text evidence="1">Protein L1 is also a translational repressor protein, it controls the translation of the L11 operon by binding to its mRNA.</text>
</comment>
<comment type="subunit">
    <text evidence="1">Part of the 50S ribosomal subunit.</text>
</comment>
<comment type="similarity">
    <text evidence="1">Belongs to the universal ribosomal protein uL1 family.</text>
</comment>
<name>RL1_BURPS</name>
<keyword id="KW-1185">Reference proteome</keyword>
<keyword id="KW-0678">Repressor</keyword>
<keyword id="KW-0687">Ribonucleoprotein</keyword>
<keyword id="KW-0689">Ribosomal protein</keyword>
<keyword id="KW-0694">RNA-binding</keyword>
<keyword id="KW-0699">rRNA-binding</keyword>
<keyword id="KW-0810">Translation regulation</keyword>
<keyword id="KW-0820">tRNA-binding</keyword>